<gene>
    <name type="primary">OPG047</name>
    <name type="ORF">MPXVgp035</name>
</gene>
<dbReference type="EMBL" id="MT903340">
    <property type="protein sequence ID" value="QNP12903.1"/>
    <property type="molecule type" value="Genomic_DNA"/>
</dbReference>
<dbReference type="RefSeq" id="YP_010377030.1">
    <property type="nucleotide sequence ID" value="NC_063383.1"/>
</dbReference>
<dbReference type="SMR" id="A0A7H0DN20"/>
<dbReference type="GeneID" id="72551443"/>
<dbReference type="Proteomes" id="UP000516359">
    <property type="component" value="Genome"/>
</dbReference>
<dbReference type="Gene3D" id="1.25.40.420">
    <property type="match status" value="1"/>
</dbReference>
<dbReference type="Gene3D" id="2.120.10.80">
    <property type="entry name" value="Kelch-type beta propeller"/>
    <property type="match status" value="1"/>
</dbReference>
<dbReference type="Gene3D" id="3.30.710.10">
    <property type="entry name" value="Potassium Channel Kv1.1, Chain A"/>
    <property type="match status" value="1"/>
</dbReference>
<dbReference type="InterPro" id="IPR011705">
    <property type="entry name" value="BACK"/>
</dbReference>
<dbReference type="InterPro" id="IPR000210">
    <property type="entry name" value="BTB/POZ_dom"/>
</dbReference>
<dbReference type="InterPro" id="IPR015915">
    <property type="entry name" value="Kelch-typ_b-propeller"/>
</dbReference>
<dbReference type="InterPro" id="IPR006652">
    <property type="entry name" value="Kelch_1"/>
</dbReference>
<dbReference type="InterPro" id="IPR011333">
    <property type="entry name" value="SKP1/BTB/POZ_sf"/>
</dbReference>
<dbReference type="PANTHER" id="PTHR24412">
    <property type="entry name" value="KELCH PROTEIN"/>
    <property type="match status" value="1"/>
</dbReference>
<dbReference type="PANTHER" id="PTHR24412:SF489">
    <property type="entry name" value="RING FINGER DOMAIN AND KELCH REPEAT-CONTAINING PROTEIN DDB_G0271372"/>
    <property type="match status" value="1"/>
</dbReference>
<dbReference type="Pfam" id="PF07707">
    <property type="entry name" value="BACK"/>
    <property type="match status" value="1"/>
</dbReference>
<dbReference type="Pfam" id="PF00651">
    <property type="entry name" value="BTB"/>
    <property type="match status" value="1"/>
</dbReference>
<dbReference type="Pfam" id="PF01344">
    <property type="entry name" value="Kelch_1"/>
    <property type="match status" value="3"/>
</dbReference>
<dbReference type="PRINTS" id="PR00501">
    <property type="entry name" value="KELCHREPEAT"/>
</dbReference>
<dbReference type="SMART" id="SM00875">
    <property type="entry name" value="BACK"/>
    <property type="match status" value="1"/>
</dbReference>
<dbReference type="SMART" id="SM00612">
    <property type="entry name" value="Kelch"/>
    <property type="match status" value="3"/>
</dbReference>
<dbReference type="SUPFAM" id="SSF117281">
    <property type="entry name" value="Kelch motif"/>
    <property type="match status" value="1"/>
</dbReference>
<dbReference type="SUPFAM" id="SSF54695">
    <property type="entry name" value="POZ domain"/>
    <property type="match status" value="1"/>
</dbReference>
<dbReference type="PROSITE" id="PS50097">
    <property type="entry name" value="BTB"/>
    <property type="match status" value="1"/>
</dbReference>
<keyword id="KW-0880">Kelch repeat</keyword>
<keyword id="KW-1185">Reference proteome</keyword>
<keyword id="KW-0677">Repeat</keyword>
<organismHost>
    <name type="scientific">Cynomys gunnisoni</name>
    <name type="common">Gunnison's prairie dog</name>
    <name type="synonym">Spermophilus gunnisoni</name>
    <dbReference type="NCBI Taxonomy" id="45479"/>
</organismHost>
<organismHost>
    <name type="scientific">Cynomys leucurus</name>
    <name type="common">White-tailed prairie dog</name>
    <dbReference type="NCBI Taxonomy" id="99825"/>
</organismHost>
<organismHost>
    <name type="scientific">Cynomys ludovicianus</name>
    <name type="common">Black-tailed prairie dog</name>
    <dbReference type="NCBI Taxonomy" id="45480"/>
</organismHost>
<organismHost>
    <name type="scientific">Cynomys mexicanus</name>
    <name type="common">Mexican prairie dog</name>
    <dbReference type="NCBI Taxonomy" id="99826"/>
</organismHost>
<organismHost>
    <name type="scientific">Cynomys parvidens</name>
    <name type="common">Utah prairie dog</name>
    <dbReference type="NCBI Taxonomy" id="99827"/>
</organismHost>
<organismHost>
    <name type="scientific">Gliridae</name>
    <name type="common">dormice</name>
    <dbReference type="NCBI Taxonomy" id="30650"/>
</organismHost>
<organismHost>
    <name type="scientific">Heliosciurus ruwenzorii</name>
    <name type="common">Ruwenzori sun squirrel</name>
    <dbReference type="NCBI Taxonomy" id="226685"/>
</organismHost>
<organismHost>
    <name type="scientific">Homo sapiens</name>
    <name type="common">Human</name>
    <dbReference type="NCBI Taxonomy" id="9606"/>
</organismHost>
<organismHost>
    <name type="scientific">Mus musculus</name>
    <name type="common">Mouse</name>
    <dbReference type="NCBI Taxonomy" id="10090"/>
</organismHost>
<protein>
    <recommendedName>
        <fullName>Immune evasion protein OPG047</fullName>
    </recommendedName>
    <alternativeName>
        <fullName>Kelch repeat protein</fullName>
    </alternativeName>
</protein>
<reference key="1">
    <citation type="journal article" date="2022" name="J. Infect. Dis.">
        <title>Exportation of Monkeypox virus from the African continent.</title>
        <authorList>
            <person name="Mauldin M.R."/>
            <person name="McCollum A.M."/>
            <person name="Nakazawa Y.J."/>
            <person name="Mandra A."/>
            <person name="Whitehouse E.R."/>
            <person name="Davidson W."/>
            <person name="Zhao H."/>
            <person name="Gao J."/>
            <person name="Li Y."/>
            <person name="Doty J."/>
            <person name="Yinka-Ogunleye A."/>
            <person name="Akinpelu A."/>
            <person name="Aruna O."/>
            <person name="Naidoo D."/>
            <person name="Lewandowski K."/>
            <person name="Afrough B."/>
            <person name="Graham V."/>
            <person name="Aarons E."/>
            <person name="Hewson R."/>
            <person name="Vipond R."/>
            <person name="Dunning J."/>
            <person name="Chand M."/>
            <person name="Brown C."/>
            <person name="Cohen-Gihon I."/>
            <person name="Erez N."/>
            <person name="Shifman O."/>
            <person name="Israeli O."/>
            <person name="Sharon M."/>
            <person name="Schwartz E."/>
            <person name="Beth-Din A."/>
            <person name="Zvi A."/>
            <person name="Mak T.M."/>
            <person name="Ng Y.K."/>
            <person name="Cui L."/>
            <person name="Lin R.T.P."/>
            <person name="Olson V.A."/>
            <person name="Brooks T."/>
            <person name="Paran N."/>
            <person name="Ihekweazu C."/>
            <person name="Reynolds M.G."/>
        </authorList>
    </citation>
    <scope>NUCLEOTIDE SEQUENCE [LARGE SCALE GENOMIC DNA]</scope>
</reference>
<name>PG047_MONPV</name>
<evidence type="ECO:0000250" key="1">
    <source>
        <dbReference type="UniProtKB" id="P24357"/>
    </source>
</evidence>
<evidence type="ECO:0000255" key="2"/>
<evidence type="ECO:0000255" key="3">
    <source>
        <dbReference type="PROSITE-ProRule" id="PRU00037"/>
    </source>
</evidence>
<evidence type="ECO:0000305" key="4"/>
<sequence length="482" mass="56218">MPIFVNTVYCKNILALYTTKKFKTIIEAIGGNIIVNSTILKKLSPYFRTHLRQKYTKNKDPVTRVCLDLDIHSLTSIVIYSYTGKVYIDSHNVVNLLRASILTSVEFIIYTCINFILRDFRKEYCIECYMMGIEYGLSNLLCHTKDFITKHFLELEDDIIDNFDYLSMKLILESDELNVPDEDYVVDFVIKWYMRRRNRLGNLLLLIKNVIRSNYLSPRGIHNVKWILDCNIIFHCDKQPRKSYKYPFIEYPMNMDQIIDIFHMCTSTHVGEVVYLIGGWMNNEIHNNAIAVNYISNNWIPIPPMNSPRLYASGIPANNKLYVVGGLPNPTSVERWFHGDAAWVNMPSLLKPRCNPAVASINNVIYVMGGHSETDTTTEYLLPNHDQWQFGPSTYYPHYKSCALVFGRRLFLVGRNAEFYCESSNTWTLIDDPIYPRDNPELIIVDNKLLLIGGFYRGSYIDTIEVYNNRTYSWNIWDGMEW</sequence>
<proteinExistence type="inferred from homology"/>
<feature type="chain" id="PRO_0000457638" description="Immune evasion protein OPG047">
    <location>
        <begin position="1"/>
        <end position="482"/>
    </location>
</feature>
<feature type="domain" description="BTB" evidence="3">
    <location>
        <begin position="20"/>
        <end position="90"/>
    </location>
</feature>
<feature type="domain" description="BACK" evidence="2">
    <location>
        <begin position="125"/>
        <end position="222"/>
    </location>
</feature>
<feature type="repeat" description="Kelch 1" evidence="2">
    <location>
        <begin position="273"/>
        <end position="319"/>
    </location>
</feature>
<feature type="repeat" description="Kelch 2" evidence="2">
    <location>
        <begin position="320"/>
        <end position="363"/>
    </location>
</feature>
<feature type="repeat" description="Kelch 3" evidence="2">
    <location>
        <begin position="365"/>
        <end position="408"/>
    </location>
</feature>
<feature type="repeat" description="Kelch 4" evidence="2">
    <location>
        <begin position="410"/>
        <end position="447"/>
    </location>
</feature>
<feature type="repeat" description="Kelch 5" evidence="2">
    <location>
        <begin position="448"/>
        <end position="482"/>
    </location>
</feature>
<accession>A0A7H0DN20</accession>
<organism>
    <name type="scientific">Monkeypox virus</name>
    <dbReference type="NCBI Taxonomy" id="10244"/>
    <lineage>
        <taxon>Viruses</taxon>
        <taxon>Varidnaviria</taxon>
        <taxon>Bamfordvirae</taxon>
        <taxon>Nucleocytoviricota</taxon>
        <taxon>Pokkesviricetes</taxon>
        <taxon>Chitovirales</taxon>
        <taxon>Poxviridae</taxon>
        <taxon>Chordopoxvirinae</taxon>
        <taxon>Orthopoxvirus</taxon>
    </lineage>
</organism>
<comment type="function">
    <text evidence="1">Might have a role in the suppression of host immune response.</text>
</comment>
<comment type="induction">
    <text evidence="1">Expressed in the early phase of the viral replicative cycle.</text>
</comment>
<comment type="similarity">
    <text evidence="4">Belongs to the orthopoxvirus OPG047 family.</text>
</comment>